<reference key="1">
    <citation type="journal article" date="2005" name="Genome Res.">
        <title>Coping with cold: the genome of the versatile marine Antarctica bacterium Pseudoalteromonas haloplanktis TAC125.</title>
        <authorList>
            <person name="Medigue C."/>
            <person name="Krin E."/>
            <person name="Pascal G."/>
            <person name="Barbe V."/>
            <person name="Bernsel A."/>
            <person name="Bertin P.N."/>
            <person name="Cheung F."/>
            <person name="Cruveiller S."/>
            <person name="D'Amico S."/>
            <person name="Duilio A."/>
            <person name="Fang G."/>
            <person name="Feller G."/>
            <person name="Ho C."/>
            <person name="Mangenot S."/>
            <person name="Marino G."/>
            <person name="Nilsson J."/>
            <person name="Parrilli E."/>
            <person name="Rocha E.P.C."/>
            <person name="Rouy Z."/>
            <person name="Sekowska A."/>
            <person name="Tutino M.L."/>
            <person name="Vallenet D."/>
            <person name="von Heijne G."/>
            <person name="Danchin A."/>
        </authorList>
    </citation>
    <scope>NUCLEOTIDE SEQUENCE [LARGE SCALE GENOMIC DNA]</scope>
    <source>
        <strain>TAC 125</strain>
    </source>
</reference>
<evidence type="ECO:0000255" key="1">
    <source>
        <dbReference type="HAMAP-Rule" id="MF_00012"/>
    </source>
</evidence>
<organism>
    <name type="scientific">Pseudoalteromonas translucida (strain TAC 125)</name>
    <dbReference type="NCBI Taxonomy" id="326442"/>
    <lineage>
        <taxon>Bacteria</taxon>
        <taxon>Pseudomonadati</taxon>
        <taxon>Pseudomonadota</taxon>
        <taxon>Gammaproteobacteria</taxon>
        <taxon>Alteromonadales</taxon>
        <taxon>Pseudoalteromonadaceae</taxon>
        <taxon>Pseudoalteromonas</taxon>
    </lineage>
</organism>
<name>ILVD2_PSET1</name>
<dbReference type="EC" id="4.2.1.9" evidence="1"/>
<dbReference type="EMBL" id="CR954247">
    <property type="protein sequence ID" value="CAI89176.1"/>
    <property type="molecule type" value="Genomic_DNA"/>
</dbReference>
<dbReference type="SMR" id="Q3ID04"/>
<dbReference type="STRING" id="326442.PSHAb0129"/>
<dbReference type="KEGG" id="pha:PSHAb0129"/>
<dbReference type="PATRIC" id="fig|326442.8.peg.3042"/>
<dbReference type="eggNOG" id="COG0129">
    <property type="taxonomic scope" value="Bacteria"/>
</dbReference>
<dbReference type="HOGENOM" id="CLU_014271_4_2_6"/>
<dbReference type="BioCyc" id="PHAL326442:PSHA_RS15485-MONOMER"/>
<dbReference type="UniPathway" id="UPA00047">
    <property type="reaction ID" value="UER00057"/>
</dbReference>
<dbReference type="UniPathway" id="UPA00049">
    <property type="reaction ID" value="UER00061"/>
</dbReference>
<dbReference type="Proteomes" id="UP000006843">
    <property type="component" value="Chromosome II"/>
</dbReference>
<dbReference type="GO" id="GO:0051537">
    <property type="term" value="F:2 iron, 2 sulfur cluster binding"/>
    <property type="evidence" value="ECO:0007669"/>
    <property type="project" value="UniProtKB-UniRule"/>
</dbReference>
<dbReference type="GO" id="GO:0004160">
    <property type="term" value="F:dihydroxy-acid dehydratase activity"/>
    <property type="evidence" value="ECO:0007669"/>
    <property type="project" value="UniProtKB-UniRule"/>
</dbReference>
<dbReference type="GO" id="GO:0000287">
    <property type="term" value="F:magnesium ion binding"/>
    <property type="evidence" value="ECO:0007669"/>
    <property type="project" value="UniProtKB-UniRule"/>
</dbReference>
<dbReference type="GO" id="GO:0009097">
    <property type="term" value="P:isoleucine biosynthetic process"/>
    <property type="evidence" value="ECO:0007669"/>
    <property type="project" value="UniProtKB-UniRule"/>
</dbReference>
<dbReference type="GO" id="GO:0009099">
    <property type="term" value="P:L-valine biosynthetic process"/>
    <property type="evidence" value="ECO:0007669"/>
    <property type="project" value="UniProtKB-UniRule"/>
</dbReference>
<dbReference type="FunFam" id="3.50.30.80:FF:000001">
    <property type="entry name" value="Dihydroxy-acid dehydratase"/>
    <property type="match status" value="1"/>
</dbReference>
<dbReference type="Gene3D" id="3.50.30.80">
    <property type="entry name" value="IlvD/EDD C-terminal domain-like"/>
    <property type="match status" value="1"/>
</dbReference>
<dbReference type="HAMAP" id="MF_00012">
    <property type="entry name" value="IlvD"/>
    <property type="match status" value="1"/>
</dbReference>
<dbReference type="InterPro" id="IPR050165">
    <property type="entry name" value="DHAD_IlvD/Edd"/>
</dbReference>
<dbReference type="InterPro" id="IPR042096">
    <property type="entry name" value="Dihydro-acid_dehy_C"/>
</dbReference>
<dbReference type="InterPro" id="IPR004404">
    <property type="entry name" value="DihydroxyA_deHydtase"/>
</dbReference>
<dbReference type="InterPro" id="IPR020558">
    <property type="entry name" value="DiOHA_6PGluconate_deHydtase_CS"/>
</dbReference>
<dbReference type="InterPro" id="IPR056740">
    <property type="entry name" value="ILV_EDD_C"/>
</dbReference>
<dbReference type="InterPro" id="IPR000581">
    <property type="entry name" value="ILV_EDD_N"/>
</dbReference>
<dbReference type="InterPro" id="IPR037237">
    <property type="entry name" value="IlvD/EDD_N"/>
</dbReference>
<dbReference type="NCBIfam" id="TIGR00110">
    <property type="entry name" value="ilvD"/>
    <property type="match status" value="1"/>
</dbReference>
<dbReference type="NCBIfam" id="NF002068">
    <property type="entry name" value="PRK00911.1"/>
    <property type="match status" value="1"/>
</dbReference>
<dbReference type="PANTHER" id="PTHR21000">
    <property type="entry name" value="DIHYDROXY-ACID DEHYDRATASE DAD"/>
    <property type="match status" value="1"/>
</dbReference>
<dbReference type="PANTHER" id="PTHR21000:SF5">
    <property type="entry name" value="DIHYDROXY-ACID DEHYDRATASE, MITOCHONDRIAL"/>
    <property type="match status" value="1"/>
</dbReference>
<dbReference type="Pfam" id="PF24877">
    <property type="entry name" value="ILV_EDD_C"/>
    <property type="match status" value="1"/>
</dbReference>
<dbReference type="Pfam" id="PF00920">
    <property type="entry name" value="ILVD_EDD_N"/>
    <property type="match status" value="1"/>
</dbReference>
<dbReference type="SUPFAM" id="SSF143975">
    <property type="entry name" value="IlvD/EDD N-terminal domain-like"/>
    <property type="match status" value="1"/>
</dbReference>
<dbReference type="SUPFAM" id="SSF52016">
    <property type="entry name" value="LeuD/IlvD-like"/>
    <property type="match status" value="1"/>
</dbReference>
<dbReference type="PROSITE" id="PS00886">
    <property type="entry name" value="ILVD_EDD_1"/>
    <property type="match status" value="1"/>
</dbReference>
<dbReference type="PROSITE" id="PS00887">
    <property type="entry name" value="ILVD_EDD_2"/>
    <property type="match status" value="1"/>
</dbReference>
<gene>
    <name evidence="1" type="primary">ilvD2</name>
    <name type="ordered locus">PSHAb0129</name>
</gene>
<protein>
    <recommendedName>
        <fullName evidence="1">Dihydroxy-acid dehydratase 2</fullName>
        <shortName evidence="1">DAD 2</shortName>
        <ecNumber evidence="1">4.2.1.9</ecNumber>
    </recommendedName>
</protein>
<accession>Q3ID04</accession>
<sequence>MTSEKPRKYSQKIVDGSAQAPSRSMLRAVGFNDDDFKKSQVGIASTWSMVTPCNMHINTLAEEVGKGVDSAGAKSVIYNTITVSDGISMGTEGMKYSLVSREVICDSIEAVSAGMGHDGIIAIGGCDKNMPGCLMGLARLNRPSIFVYGGTILPGENHTDIVSVFEAVGSYAAGDIPITQLEHIEKTAIPGAGSCGGMYTANTLASAIEALGMSMPNSSAQNAISQNKKQDCIDAGKAIVYLLEHDIKPSDIMTKKAFENAITLIITLGGSTNAVLHLIAMADAVGVEVTLDDFVRIGDKTPVIADLRPSGQYLMSELIEIGGIQPLMKRLLDAGMLHGDCMTVTGKTMAENLADVADYPAGQNIILPFDKPIKKDSHLVILAGNLAPEGAVSKITGKEGLRFTGNAKVYDSEEQGFAAIIDGQVVAGDVVVIRYEGPKGGPGMREMLSPTSAIMGKGLGNDVALITDGRFSGGSRGFVVGHVTPEAYEGGAIALVENGDSITIDAQSREMTLNITDEEMASRKQRWQQPAPKYTRGLLAKYARTVSSASTGAVTDKPS</sequence>
<proteinExistence type="inferred from homology"/>
<comment type="function">
    <text evidence="1">Functions in the biosynthesis of branched-chain amino acids. Catalyzes the dehydration of (2R,3R)-2,3-dihydroxy-3-methylpentanoate (2,3-dihydroxy-3-methylvalerate) into 2-oxo-3-methylpentanoate (2-oxo-3-methylvalerate) and of (2R)-2,3-dihydroxy-3-methylbutanoate (2,3-dihydroxyisovalerate) into 2-oxo-3-methylbutanoate (2-oxoisovalerate), the penultimate precursor to L-isoleucine and L-valine, respectively.</text>
</comment>
<comment type="catalytic activity">
    <reaction evidence="1">
        <text>(2R)-2,3-dihydroxy-3-methylbutanoate = 3-methyl-2-oxobutanoate + H2O</text>
        <dbReference type="Rhea" id="RHEA:24809"/>
        <dbReference type="ChEBI" id="CHEBI:11851"/>
        <dbReference type="ChEBI" id="CHEBI:15377"/>
        <dbReference type="ChEBI" id="CHEBI:49072"/>
        <dbReference type="EC" id="4.2.1.9"/>
    </reaction>
    <physiologicalReaction direction="left-to-right" evidence="1">
        <dbReference type="Rhea" id="RHEA:24810"/>
    </physiologicalReaction>
</comment>
<comment type="catalytic activity">
    <reaction evidence="1">
        <text>(2R,3R)-2,3-dihydroxy-3-methylpentanoate = (S)-3-methyl-2-oxopentanoate + H2O</text>
        <dbReference type="Rhea" id="RHEA:27694"/>
        <dbReference type="ChEBI" id="CHEBI:15377"/>
        <dbReference type="ChEBI" id="CHEBI:35146"/>
        <dbReference type="ChEBI" id="CHEBI:49258"/>
        <dbReference type="EC" id="4.2.1.9"/>
    </reaction>
    <physiologicalReaction direction="left-to-right" evidence="1">
        <dbReference type="Rhea" id="RHEA:27695"/>
    </physiologicalReaction>
</comment>
<comment type="cofactor">
    <cofactor evidence="1">
        <name>[2Fe-2S] cluster</name>
        <dbReference type="ChEBI" id="CHEBI:190135"/>
    </cofactor>
    <text evidence="1">Binds 1 [2Fe-2S] cluster per subunit. This cluster acts as a Lewis acid cofactor.</text>
</comment>
<comment type="cofactor">
    <cofactor evidence="1">
        <name>Mg(2+)</name>
        <dbReference type="ChEBI" id="CHEBI:18420"/>
    </cofactor>
</comment>
<comment type="pathway">
    <text evidence="1">Amino-acid biosynthesis; L-isoleucine biosynthesis; L-isoleucine from 2-oxobutanoate: step 3/4.</text>
</comment>
<comment type="pathway">
    <text evidence="1">Amino-acid biosynthesis; L-valine biosynthesis; L-valine from pyruvate: step 3/4.</text>
</comment>
<comment type="subunit">
    <text evidence="1">Homodimer.</text>
</comment>
<comment type="similarity">
    <text evidence="1">Belongs to the IlvD/Edd family.</text>
</comment>
<keyword id="KW-0001">2Fe-2S</keyword>
<keyword id="KW-0028">Amino-acid biosynthesis</keyword>
<keyword id="KW-0100">Branched-chain amino acid biosynthesis</keyword>
<keyword id="KW-0408">Iron</keyword>
<keyword id="KW-0411">Iron-sulfur</keyword>
<keyword id="KW-0456">Lyase</keyword>
<keyword id="KW-0460">Magnesium</keyword>
<keyword id="KW-0479">Metal-binding</keyword>
<keyword id="KW-1185">Reference proteome</keyword>
<feature type="chain" id="PRO_0000225409" description="Dihydroxy-acid dehydratase 2">
    <location>
        <begin position="1"/>
        <end position="559"/>
    </location>
</feature>
<feature type="active site" description="Proton acceptor" evidence="1">
    <location>
        <position position="472"/>
    </location>
</feature>
<feature type="binding site" evidence="1">
    <location>
        <position position="53"/>
    </location>
    <ligand>
        <name>[2Fe-2S] cluster</name>
        <dbReference type="ChEBI" id="CHEBI:190135"/>
    </ligand>
</feature>
<feature type="binding site" evidence="1">
    <location>
        <position position="85"/>
    </location>
    <ligand>
        <name>Mg(2+)</name>
        <dbReference type="ChEBI" id="CHEBI:18420"/>
    </ligand>
</feature>
<feature type="binding site" evidence="1">
    <location>
        <position position="126"/>
    </location>
    <ligand>
        <name>[2Fe-2S] cluster</name>
        <dbReference type="ChEBI" id="CHEBI:190135"/>
    </ligand>
</feature>
<feature type="binding site" evidence="1">
    <location>
        <position position="127"/>
    </location>
    <ligand>
        <name>Mg(2+)</name>
        <dbReference type="ChEBI" id="CHEBI:18420"/>
    </ligand>
</feature>
<feature type="binding site" description="via carbamate group" evidence="1">
    <location>
        <position position="128"/>
    </location>
    <ligand>
        <name>Mg(2+)</name>
        <dbReference type="ChEBI" id="CHEBI:18420"/>
    </ligand>
</feature>
<feature type="binding site" evidence="1">
    <location>
        <position position="195"/>
    </location>
    <ligand>
        <name>[2Fe-2S] cluster</name>
        <dbReference type="ChEBI" id="CHEBI:190135"/>
    </ligand>
</feature>
<feature type="binding site" evidence="1">
    <location>
        <position position="446"/>
    </location>
    <ligand>
        <name>Mg(2+)</name>
        <dbReference type="ChEBI" id="CHEBI:18420"/>
    </ligand>
</feature>
<feature type="modified residue" description="N6-carboxylysine" evidence="1">
    <location>
        <position position="128"/>
    </location>
</feature>